<organism>
    <name type="scientific">Rattus norvegicus</name>
    <name type="common">Rat</name>
    <dbReference type="NCBI Taxonomy" id="10116"/>
    <lineage>
        <taxon>Eukaryota</taxon>
        <taxon>Metazoa</taxon>
        <taxon>Chordata</taxon>
        <taxon>Craniata</taxon>
        <taxon>Vertebrata</taxon>
        <taxon>Euteleostomi</taxon>
        <taxon>Mammalia</taxon>
        <taxon>Eutheria</taxon>
        <taxon>Euarchontoglires</taxon>
        <taxon>Glires</taxon>
        <taxon>Rodentia</taxon>
        <taxon>Myomorpha</taxon>
        <taxon>Muroidea</taxon>
        <taxon>Muridae</taxon>
        <taxon>Murinae</taxon>
        <taxon>Rattus</taxon>
    </lineage>
</organism>
<reference key="1">
    <citation type="journal article" date="1996" name="Dev. Biol.">
        <title>Identification of novel paired homeodomain protein related to C. elegans unc-4 as a potential downstream target of MASH1.</title>
        <authorList>
            <person name="Saito T."/>
            <person name="Lo L."/>
            <person name="Anderson D.J."/>
            <person name="Mikoshiba K."/>
        </authorList>
    </citation>
    <scope>NUCLEOTIDE SEQUENCE [MRNA]</scope>
    <scope>TISSUE SPECIFICITY</scope>
    <source>
        <strain>Sprague-Dawley</strain>
        <tissue>Head</tissue>
    </source>
</reference>
<protein>
    <recommendedName>
        <fullName>Homeobox protein unc-4 homolog</fullName>
    </recommendedName>
    <alternativeName>
        <fullName>Homeobox protein Uncx4.1</fullName>
    </alternativeName>
    <alternativeName>
        <fullName>Paired-type homeodomain transcription factor 1</fullName>
    </alternativeName>
</protein>
<proteinExistence type="evidence at transcript level"/>
<accession>P97830</accession>
<keyword id="KW-0217">Developmental protein</keyword>
<keyword id="KW-0221">Differentiation</keyword>
<keyword id="KW-0238">DNA-binding</keyword>
<keyword id="KW-0371">Homeobox</keyword>
<keyword id="KW-0524">Neurogenesis</keyword>
<keyword id="KW-0539">Nucleus</keyword>
<keyword id="KW-1185">Reference proteome</keyword>
<keyword id="KW-0804">Transcription</keyword>
<keyword id="KW-0805">Transcription regulation</keyword>
<comment type="function">
    <text evidence="1">Transcription factor involved in somitogenesis and neurogenesis. Required for the maintenance and differentiation of particular elements of the axial skeleton. May act upstream of PAX9. Plays a role in controlling the development of connections of hypothalamic neurons to pituitary elements, allowing central neurons to reach the peripheral blood circulation and to deliver hormones for control of peripheral functions (By similarity).</text>
</comment>
<comment type="subcellular location">
    <subcellularLocation>
        <location evidence="2">Nucleus</location>
    </subcellularLocation>
</comment>
<comment type="tissue specificity">
    <text evidence="4">Expressed in a narrow layer adjacent to the ventricular zone of the dorsal spinal cord, preceding overt neuronal differentiation.</text>
</comment>
<comment type="similarity">
    <text evidence="5">Belongs to the paired homeobox family. Unc-4 subfamily.</text>
</comment>
<name>UNC4_RAT</name>
<evidence type="ECO:0000250" key="1"/>
<evidence type="ECO:0000255" key="2">
    <source>
        <dbReference type="PROSITE-ProRule" id="PRU00108"/>
    </source>
</evidence>
<evidence type="ECO:0000256" key="3">
    <source>
        <dbReference type="SAM" id="MobiDB-lite"/>
    </source>
</evidence>
<evidence type="ECO:0000269" key="4">
    <source>
    </source>
</evidence>
<evidence type="ECO:0000305" key="5"/>
<dbReference type="EMBL" id="D87748">
    <property type="protein sequence ID" value="BAA13452.1"/>
    <property type="molecule type" value="mRNA"/>
</dbReference>
<dbReference type="RefSeq" id="NP_058875.1">
    <property type="nucleotide sequence ID" value="NM_017179.1"/>
</dbReference>
<dbReference type="FunCoup" id="P97830">
    <property type="interactions" value="103"/>
</dbReference>
<dbReference type="STRING" id="10116.ENSRNOP00000001730"/>
<dbReference type="GlyGen" id="P97830">
    <property type="glycosylation" value="1 site"/>
</dbReference>
<dbReference type="PhosphoSitePlus" id="P97830"/>
<dbReference type="PaxDb" id="10116-ENSRNOP00000001730"/>
<dbReference type="GeneID" id="29375"/>
<dbReference type="KEGG" id="rno:29375"/>
<dbReference type="UCSC" id="RGD:69361">
    <property type="organism name" value="rat"/>
</dbReference>
<dbReference type="AGR" id="RGD:69361"/>
<dbReference type="CTD" id="340260"/>
<dbReference type="RGD" id="69361">
    <property type="gene designation" value="Uncx"/>
</dbReference>
<dbReference type="eggNOG" id="KOG0490">
    <property type="taxonomic scope" value="Eukaryota"/>
</dbReference>
<dbReference type="InParanoid" id="P97830"/>
<dbReference type="PhylomeDB" id="P97830"/>
<dbReference type="PRO" id="PR:P97830"/>
<dbReference type="Proteomes" id="UP000002494">
    <property type="component" value="Unplaced"/>
</dbReference>
<dbReference type="GO" id="GO:0005634">
    <property type="term" value="C:nucleus"/>
    <property type="evidence" value="ECO:0007669"/>
    <property type="project" value="UniProtKB-SubCell"/>
</dbReference>
<dbReference type="GO" id="GO:0000981">
    <property type="term" value="F:DNA-binding transcription factor activity, RNA polymerase II-specific"/>
    <property type="evidence" value="ECO:0007669"/>
    <property type="project" value="InterPro"/>
</dbReference>
<dbReference type="GO" id="GO:1990837">
    <property type="term" value="F:sequence-specific double-stranded DNA binding"/>
    <property type="evidence" value="ECO:0000266"/>
    <property type="project" value="RGD"/>
</dbReference>
<dbReference type="GO" id="GO:0001502">
    <property type="term" value="P:cartilage condensation"/>
    <property type="evidence" value="ECO:0000266"/>
    <property type="project" value="RGD"/>
</dbReference>
<dbReference type="GO" id="GO:0035726">
    <property type="term" value="P:common myeloid progenitor cell proliferation"/>
    <property type="evidence" value="ECO:0000266"/>
    <property type="project" value="RGD"/>
</dbReference>
<dbReference type="GO" id="GO:0021516">
    <property type="term" value="P:dorsal spinal cord development"/>
    <property type="evidence" value="ECO:0000266"/>
    <property type="project" value="RGD"/>
</dbReference>
<dbReference type="GO" id="GO:0021889">
    <property type="term" value="P:olfactory bulb interneuron differentiation"/>
    <property type="evidence" value="ECO:0000266"/>
    <property type="project" value="RGD"/>
</dbReference>
<dbReference type="GO" id="GO:0007389">
    <property type="term" value="P:pattern specification process"/>
    <property type="evidence" value="ECO:0000266"/>
    <property type="project" value="RGD"/>
</dbReference>
<dbReference type="GO" id="GO:0045595">
    <property type="term" value="P:regulation of cell differentiation"/>
    <property type="evidence" value="ECO:0000266"/>
    <property type="project" value="RGD"/>
</dbReference>
<dbReference type="GO" id="GO:0010468">
    <property type="term" value="P:regulation of gene expression"/>
    <property type="evidence" value="ECO:0000266"/>
    <property type="project" value="RGD"/>
</dbReference>
<dbReference type="CDD" id="cd00086">
    <property type="entry name" value="homeodomain"/>
    <property type="match status" value="1"/>
</dbReference>
<dbReference type="FunFam" id="1.10.10.60:FF:000057">
    <property type="entry name" value="Short stature homeobox 2"/>
    <property type="match status" value="1"/>
</dbReference>
<dbReference type="Gene3D" id="1.10.10.60">
    <property type="entry name" value="Homeodomain-like"/>
    <property type="match status" value="1"/>
</dbReference>
<dbReference type="InterPro" id="IPR001356">
    <property type="entry name" value="HD"/>
</dbReference>
<dbReference type="InterPro" id="IPR017970">
    <property type="entry name" value="Homeobox_CS"/>
</dbReference>
<dbReference type="InterPro" id="IPR009057">
    <property type="entry name" value="Homeodomain-like_sf"/>
</dbReference>
<dbReference type="PANTHER" id="PTHR46799">
    <property type="entry name" value="HOMEOBOX PROTEIN UNC-4 HOMOLOG"/>
    <property type="match status" value="1"/>
</dbReference>
<dbReference type="PANTHER" id="PTHR46799:SF1">
    <property type="entry name" value="HOMEOBOX PROTEIN UNC-4 HOMOLOG"/>
    <property type="match status" value="1"/>
</dbReference>
<dbReference type="Pfam" id="PF00046">
    <property type="entry name" value="Homeodomain"/>
    <property type="match status" value="1"/>
</dbReference>
<dbReference type="SMART" id="SM00389">
    <property type="entry name" value="HOX"/>
    <property type="match status" value="1"/>
</dbReference>
<dbReference type="SUPFAM" id="SSF46689">
    <property type="entry name" value="Homeodomain-like"/>
    <property type="match status" value="1"/>
</dbReference>
<dbReference type="PROSITE" id="PS00027">
    <property type="entry name" value="HOMEOBOX_1"/>
    <property type="match status" value="1"/>
</dbReference>
<dbReference type="PROSITE" id="PS50071">
    <property type="entry name" value="HOMEOBOX_2"/>
    <property type="match status" value="1"/>
</dbReference>
<gene>
    <name type="primary">Uncx</name>
    <name type="synonym">Phd1</name>
    <name type="synonym">Uncx4.1</name>
</gene>
<feature type="chain" id="PRO_0000334626" description="Homeobox protein unc-4 homolog">
    <location>
        <begin position="1"/>
        <end position="530"/>
    </location>
</feature>
<feature type="DNA-binding region" description="Homeobox" evidence="2">
    <location>
        <begin position="109"/>
        <end position="168"/>
    </location>
</feature>
<feature type="region of interest" description="Disordered" evidence="3">
    <location>
        <begin position="90"/>
        <end position="111"/>
    </location>
</feature>
<feature type="region of interest" description="Disordered" evidence="3">
    <location>
        <begin position="165"/>
        <end position="362"/>
    </location>
</feature>
<feature type="region of interest" description="Disordered" evidence="3">
    <location>
        <begin position="400"/>
        <end position="530"/>
    </location>
</feature>
<feature type="compositionally biased region" description="Basic and acidic residues" evidence="3">
    <location>
        <begin position="195"/>
        <end position="205"/>
    </location>
</feature>
<feature type="compositionally biased region" description="Basic residues" evidence="3">
    <location>
        <begin position="206"/>
        <end position="224"/>
    </location>
</feature>
<feature type="compositionally biased region" description="Low complexity" evidence="3">
    <location>
        <begin position="228"/>
        <end position="240"/>
    </location>
</feature>
<feature type="compositionally biased region" description="Pro residues" evidence="3">
    <location>
        <begin position="248"/>
        <end position="257"/>
    </location>
</feature>
<feature type="compositionally biased region" description="Pro residues" evidence="3">
    <location>
        <begin position="275"/>
        <end position="284"/>
    </location>
</feature>
<feature type="compositionally biased region" description="Pro residues" evidence="3">
    <location>
        <begin position="407"/>
        <end position="419"/>
    </location>
</feature>
<feature type="compositionally biased region" description="Low complexity" evidence="3">
    <location>
        <begin position="420"/>
        <end position="430"/>
    </location>
</feature>
<feature type="compositionally biased region" description="Low complexity" evidence="3">
    <location>
        <begin position="455"/>
        <end position="476"/>
    </location>
</feature>
<feature type="compositionally biased region" description="Pro residues" evidence="3">
    <location>
        <begin position="481"/>
        <end position="504"/>
    </location>
</feature>
<sequence>MMDGRLLEHPHAQFGGSLGGVVGFPYPLGHHHVYELAGHQLQSAAAAAAAASVPFSIDGLLSGSCAAAAASVVNPTPLLPAACGVAGESQPFKLADSGDPDKESPGCKRRRTRTNFTGWQLEELEKAFNESHYPDVFMREALAVRLDLVESRVQVWFQNRRAKWRKKENTKKGPGRPAHNSHPTTCSGEPMDPEEIARKELEKMEKKKRKHEKKLLKSQSRHLHSPGGLSLHSAPSSDSDSGGGGLSPEPPEPPPPTASAKGPGAHGSGIAGSAPVPPGEPPAPGTCDPAFYPSQRSGAGSQPRLGRPADKDTVPCGPGAASTAGLPKASPFSVESLLSDSPPRRKATPANTAATAGLDFTPGLPCAPRTLIGKGHFLLYPITQPLGFLVPQAALKGGAGPELVPKDAPPAPPAPPAPPAQASFGAFPGPVGAADPAFARRSPEVVASPGPPAPASFRGLAAAAAESGAGDCADAGTVCPAAPPPPPLETSPGPGPRAPSPPGEPATCGAAEPGAATGSSPPEGEEVDMD</sequence>